<comment type="function">
    <text evidence="1">S-adenosyl-L-methionine-dependent methyltransferase that catalyzes the trimethylation of the amino group of the modified target histidine residue in translation elongation factor 2 (EF-2), to form an intermediate called diphthine. The three successive methylation reactions represent the second step of diphthamide biosynthesis.</text>
</comment>
<comment type="catalytic activity">
    <reaction evidence="1">
        <text>2-[(3S)-amino-3-carboxypropyl]-L-histidyl-[translation elongation factor 2] + 3 S-adenosyl-L-methionine = diphthine-[translation elongation factor 2] + 3 S-adenosyl-L-homocysteine + 3 H(+)</text>
        <dbReference type="Rhea" id="RHEA:36415"/>
        <dbReference type="Rhea" id="RHEA-COMP:9749"/>
        <dbReference type="Rhea" id="RHEA-COMP:10172"/>
        <dbReference type="ChEBI" id="CHEBI:15378"/>
        <dbReference type="ChEBI" id="CHEBI:57856"/>
        <dbReference type="ChEBI" id="CHEBI:59789"/>
        <dbReference type="ChEBI" id="CHEBI:73995"/>
        <dbReference type="ChEBI" id="CHEBI:82696"/>
        <dbReference type="EC" id="2.1.1.98"/>
    </reaction>
</comment>
<comment type="pathway">
    <text evidence="1">Protein modification; peptidyl-diphthamide biosynthesis.</text>
</comment>
<comment type="subunit">
    <text evidence="1">Homodimer.</text>
</comment>
<comment type="similarity">
    <text evidence="1">Belongs to the diphthine synthase family.</text>
</comment>
<name>DPHB_SACI6</name>
<sequence length="257" mass="28757">MSILSLVGLGISKKFITENAIDTLNNSDIIIFDKYTSRSCDINVDVLRRLVKGGKTLIEADRSLLENNSKIIMDYLDKNYNVSIASIGDVLIATTHVSLLIEAKQRGHNVKVIPGISVHCYLISKSLLSSYKFGKSVTVTFPYNDFIDPTPYNVIKDNKERGLHTILYLDLKSEKAMTANEALQILLRLEDKHRKNVLSKSDIVIVGARLGCDDEKIVALTVEEATLYDFGNTPHIIIIPGNLHYMEADAIKWMLMS</sequence>
<dbReference type="EC" id="2.1.1.98" evidence="1"/>
<dbReference type="EMBL" id="CP001402">
    <property type="protein sequence ID" value="ACR41861.1"/>
    <property type="molecule type" value="Genomic_DNA"/>
</dbReference>
<dbReference type="SMR" id="C4KGZ7"/>
<dbReference type="KEGG" id="sid:M164_1257"/>
<dbReference type="HOGENOM" id="CLU_066040_0_0_2"/>
<dbReference type="UniPathway" id="UPA00559"/>
<dbReference type="Proteomes" id="UP000001479">
    <property type="component" value="Chromosome"/>
</dbReference>
<dbReference type="GO" id="GO:0004164">
    <property type="term" value="F:diphthine synthase activity"/>
    <property type="evidence" value="ECO:0007669"/>
    <property type="project" value="UniProtKB-UniRule"/>
</dbReference>
<dbReference type="GO" id="GO:0032259">
    <property type="term" value="P:methylation"/>
    <property type="evidence" value="ECO:0007669"/>
    <property type="project" value="UniProtKB-KW"/>
</dbReference>
<dbReference type="GO" id="GO:0017183">
    <property type="term" value="P:protein histidyl modification to diphthamide"/>
    <property type="evidence" value="ECO:0007669"/>
    <property type="project" value="UniProtKB-UniRule"/>
</dbReference>
<dbReference type="CDD" id="cd11647">
    <property type="entry name" value="DHP5_DphB"/>
    <property type="match status" value="1"/>
</dbReference>
<dbReference type="Gene3D" id="3.40.1010.10">
    <property type="entry name" value="Cobalt-precorrin-4 Transmethylase, Domain 1"/>
    <property type="match status" value="1"/>
</dbReference>
<dbReference type="Gene3D" id="3.30.950.10">
    <property type="entry name" value="Methyltransferase, Cobalt-precorrin-4 Transmethylase, Domain 2"/>
    <property type="match status" value="1"/>
</dbReference>
<dbReference type="HAMAP" id="MF_01084">
    <property type="entry name" value="Diphthine_synth"/>
    <property type="match status" value="1"/>
</dbReference>
<dbReference type="InterPro" id="IPR000878">
    <property type="entry name" value="4pyrrol_Mease"/>
</dbReference>
<dbReference type="InterPro" id="IPR035996">
    <property type="entry name" value="4pyrrol_Methylase_sf"/>
</dbReference>
<dbReference type="InterPro" id="IPR014777">
    <property type="entry name" value="4pyrrole_Mease_sub1"/>
</dbReference>
<dbReference type="InterPro" id="IPR014776">
    <property type="entry name" value="4pyrrole_Mease_sub2"/>
</dbReference>
<dbReference type="InterPro" id="IPR004551">
    <property type="entry name" value="Dphthn_synthase"/>
</dbReference>
<dbReference type="NCBIfam" id="TIGR00522">
    <property type="entry name" value="dph5"/>
    <property type="match status" value="1"/>
</dbReference>
<dbReference type="PANTHER" id="PTHR10882:SF0">
    <property type="entry name" value="DIPHTHINE METHYL ESTER SYNTHASE"/>
    <property type="match status" value="1"/>
</dbReference>
<dbReference type="PANTHER" id="PTHR10882">
    <property type="entry name" value="DIPHTHINE SYNTHASE"/>
    <property type="match status" value="1"/>
</dbReference>
<dbReference type="Pfam" id="PF00590">
    <property type="entry name" value="TP_methylase"/>
    <property type="match status" value="1"/>
</dbReference>
<dbReference type="PIRSF" id="PIRSF036432">
    <property type="entry name" value="Diphthine_synth"/>
    <property type="match status" value="1"/>
</dbReference>
<dbReference type="SUPFAM" id="SSF53790">
    <property type="entry name" value="Tetrapyrrole methylase"/>
    <property type="match status" value="1"/>
</dbReference>
<gene>
    <name evidence="1" type="primary">dphB</name>
    <name type="ordered locus">M164_1257</name>
</gene>
<accession>C4KGZ7</accession>
<proteinExistence type="inferred from homology"/>
<keyword id="KW-0489">Methyltransferase</keyword>
<keyword id="KW-0949">S-adenosyl-L-methionine</keyword>
<keyword id="KW-0808">Transferase</keyword>
<protein>
    <recommendedName>
        <fullName evidence="1">Diphthine synthase</fullName>
        <ecNumber evidence="1">2.1.1.98</ecNumber>
    </recommendedName>
    <alternativeName>
        <fullName evidence="1">Diphthamide biosynthesis methyltransferase</fullName>
    </alternativeName>
</protein>
<organism>
    <name type="scientific">Saccharolobus islandicus (strain M.16.4 / Kamchatka #3)</name>
    <name type="common">Sulfolobus islandicus</name>
    <dbReference type="NCBI Taxonomy" id="426118"/>
    <lineage>
        <taxon>Archaea</taxon>
        <taxon>Thermoproteota</taxon>
        <taxon>Thermoprotei</taxon>
        <taxon>Sulfolobales</taxon>
        <taxon>Sulfolobaceae</taxon>
        <taxon>Saccharolobus</taxon>
    </lineage>
</organism>
<evidence type="ECO:0000255" key="1">
    <source>
        <dbReference type="HAMAP-Rule" id="MF_01084"/>
    </source>
</evidence>
<reference key="1">
    <citation type="journal article" date="2009" name="Proc. Natl. Acad. Sci. U.S.A.">
        <title>Biogeography of the Sulfolobus islandicus pan-genome.</title>
        <authorList>
            <person name="Reno M.L."/>
            <person name="Held N.L."/>
            <person name="Fields C.J."/>
            <person name="Burke P.V."/>
            <person name="Whitaker R.J."/>
        </authorList>
    </citation>
    <scope>NUCLEOTIDE SEQUENCE [LARGE SCALE GENOMIC DNA]</scope>
    <source>
        <strain>M.16.4 / Kamchatka #3</strain>
    </source>
</reference>
<feature type="chain" id="PRO_1000213521" description="Diphthine synthase">
    <location>
        <begin position="1"/>
        <end position="257"/>
    </location>
</feature>
<feature type="binding site" evidence="1">
    <location>
        <position position="11"/>
    </location>
    <ligand>
        <name>S-adenosyl-L-methionine</name>
        <dbReference type="ChEBI" id="CHEBI:59789"/>
    </ligand>
</feature>
<feature type="binding site" evidence="1">
    <location>
        <position position="89"/>
    </location>
    <ligand>
        <name>S-adenosyl-L-methionine</name>
        <dbReference type="ChEBI" id="CHEBI:59789"/>
    </ligand>
</feature>
<feature type="binding site" evidence="1">
    <location>
        <position position="92"/>
    </location>
    <ligand>
        <name>S-adenosyl-L-methionine</name>
        <dbReference type="ChEBI" id="CHEBI:59789"/>
    </ligand>
</feature>
<feature type="binding site" evidence="1">
    <location>
        <begin position="117"/>
        <end position="118"/>
    </location>
    <ligand>
        <name>S-adenosyl-L-methionine</name>
        <dbReference type="ChEBI" id="CHEBI:59789"/>
    </ligand>
</feature>
<feature type="binding site" evidence="1">
    <location>
        <position position="169"/>
    </location>
    <ligand>
        <name>S-adenosyl-L-methionine</name>
        <dbReference type="ChEBI" id="CHEBI:59789"/>
    </ligand>
</feature>
<feature type="binding site" evidence="1">
    <location>
        <position position="210"/>
    </location>
    <ligand>
        <name>S-adenosyl-L-methionine</name>
        <dbReference type="ChEBI" id="CHEBI:59789"/>
    </ligand>
</feature>
<feature type="binding site" evidence="1">
    <location>
        <position position="235"/>
    </location>
    <ligand>
        <name>S-adenosyl-L-methionine</name>
        <dbReference type="ChEBI" id="CHEBI:59789"/>
    </ligand>
</feature>